<comment type="function">
    <text evidence="1">Involved in the biosynthesis of the central metabolite phospho-alpha-D-ribosyl-1-pyrophosphate (PRPP) via the transfer of pyrophosphoryl group from ATP to 1-hydroxyl of ribose-5-phosphate (Rib-5-P).</text>
</comment>
<comment type="catalytic activity">
    <reaction evidence="1">
        <text>D-ribose 5-phosphate + ATP = 5-phospho-alpha-D-ribose 1-diphosphate + AMP + H(+)</text>
        <dbReference type="Rhea" id="RHEA:15609"/>
        <dbReference type="ChEBI" id="CHEBI:15378"/>
        <dbReference type="ChEBI" id="CHEBI:30616"/>
        <dbReference type="ChEBI" id="CHEBI:58017"/>
        <dbReference type="ChEBI" id="CHEBI:78346"/>
        <dbReference type="ChEBI" id="CHEBI:456215"/>
        <dbReference type="EC" id="2.7.6.1"/>
    </reaction>
</comment>
<comment type="cofactor">
    <cofactor evidence="1">
        <name>Mg(2+)</name>
        <dbReference type="ChEBI" id="CHEBI:18420"/>
    </cofactor>
    <text evidence="1">Binds 2 Mg(2+) ions per subunit.</text>
</comment>
<comment type="pathway">
    <text evidence="1">Metabolic intermediate biosynthesis; 5-phospho-alpha-D-ribose 1-diphosphate biosynthesis; 5-phospho-alpha-D-ribose 1-diphosphate from D-ribose 5-phosphate (route I): step 1/1.</text>
</comment>
<comment type="subunit">
    <text evidence="1">Homohexamer.</text>
</comment>
<comment type="subcellular location">
    <subcellularLocation>
        <location evidence="1">Cytoplasm</location>
    </subcellularLocation>
</comment>
<comment type="disruption phenotype">
    <text evidence="2">Probably essential, it was not disrupted in a global transposon mutagenesis study.</text>
</comment>
<comment type="similarity">
    <text evidence="1">Belongs to the ribose-phosphate pyrophosphokinase family. Class I subfamily.</text>
</comment>
<dbReference type="EC" id="2.7.6.1" evidence="1"/>
<dbReference type="EMBL" id="L43967">
    <property type="protein sequence ID" value="AAC71275.2"/>
    <property type="molecule type" value="Genomic_DNA"/>
</dbReference>
<dbReference type="PIR" id="D64206">
    <property type="entry name" value="D64206"/>
</dbReference>
<dbReference type="RefSeq" id="WP_009885723.1">
    <property type="nucleotide sequence ID" value="NC_000908.2"/>
</dbReference>
<dbReference type="SMR" id="P47304"/>
<dbReference type="FunCoup" id="P47304">
    <property type="interactions" value="202"/>
</dbReference>
<dbReference type="STRING" id="243273.MG_058"/>
<dbReference type="GeneID" id="88282175"/>
<dbReference type="KEGG" id="mge:MG_058"/>
<dbReference type="eggNOG" id="COG0462">
    <property type="taxonomic scope" value="Bacteria"/>
</dbReference>
<dbReference type="HOGENOM" id="CLU_033546_2_0_14"/>
<dbReference type="InParanoid" id="P47304"/>
<dbReference type="OrthoDB" id="9777067at2"/>
<dbReference type="UniPathway" id="UPA00087">
    <property type="reaction ID" value="UER00172"/>
</dbReference>
<dbReference type="Proteomes" id="UP000000807">
    <property type="component" value="Chromosome"/>
</dbReference>
<dbReference type="GO" id="GO:0005737">
    <property type="term" value="C:cytoplasm"/>
    <property type="evidence" value="ECO:0000318"/>
    <property type="project" value="GO_Central"/>
</dbReference>
<dbReference type="GO" id="GO:0002189">
    <property type="term" value="C:ribose phosphate diphosphokinase complex"/>
    <property type="evidence" value="ECO:0000318"/>
    <property type="project" value="GO_Central"/>
</dbReference>
<dbReference type="GO" id="GO:0005524">
    <property type="term" value="F:ATP binding"/>
    <property type="evidence" value="ECO:0007669"/>
    <property type="project" value="UniProtKB-KW"/>
</dbReference>
<dbReference type="GO" id="GO:0016301">
    <property type="term" value="F:kinase activity"/>
    <property type="evidence" value="ECO:0007669"/>
    <property type="project" value="UniProtKB-KW"/>
</dbReference>
<dbReference type="GO" id="GO:0000287">
    <property type="term" value="F:magnesium ion binding"/>
    <property type="evidence" value="ECO:0007669"/>
    <property type="project" value="UniProtKB-UniRule"/>
</dbReference>
<dbReference type="GO" id="GO:0004749">
    <property type="term" value="F:ribose phosphate diphosphokinase activity"/>
    <property type="evidence" value="ECO:0000318"/>
    <property type="project" value="GO_Central"/>
</dbReference>
<dbReference type="GO" id="GO:0006015">
    <property type="term" value="P:5-phosphoribose 1-diphosphate biosynthetic process"/>
    <property type="evidence" value="ECO:0000318"/>
    <property type="project" value="GO_Central"/>
</dbReference>
<dbReference type="GO" id="GO:0006164">
    <property type="term" value="P:purine nucleotide biosynthetic process"/>
    <property type="evidence" value="ECO:0000318"/>
    <property type="project" value="GO_Central"/>
</dbReference>
<dbReference type="GO" id="GO:0009156">
    <property type="term" value="P:ribonucleoside monophosphate biosynthetic process"/>
    <property type="evidence" value="ECO:0007669"/>
    <property type="project" value="InterPro"/>
</dbReference>
<dbReference type="CDD" id="cd06223">
    <property type="entry name" value="PRTases_typeI"/>
    <property type="match status" value="1"/>
</dbReference>
<dbReference type="FunFam" id="3.40.50.2020:FF:000007">
    <property type="entry name" value="Ribose-phosphate pyrophosphokinase"/>
    <property type="match status" value="1"/>
</dbReference>
<dbReference type="Gene3D" id="3.40.50.2020">
    <property type="match status" value="2"/>
</dbReference>
<dbReference type="HAMAP" id="MF_00583_B">
    <property type="entry name" value="RibP_PPkinase_B"/>
    <property type="match status" value="1"/>
</dbReference>
<dbReference type="InterPro" id="IPR000842">
    <property type="entry name" value="PRib_PP_synth_CS"/>
</dbReference>
<dbReference type="InterPro" id="IPR029099">
    <property type="entry name" value="Pribosyltran_N"/>
</dbReference>
<dbReference type="InterPro" id="IPR000836">
    <property type="entry name" value="PRibTrfase_dom"/>
</dbReference>
<dbReference type="InterPro" id="IPR029057">
    <property type="entry name" value="PRTase-like"/>
</dbReference>
<dbReference type="InterPro" id="IPR005946">
    <property type="entry name" value="Rib-P_diPkinase"/>
</dbReference>
<dbReference type="InterPro" id="IPR037515">
    <property type="entry name" value="Rib-P_diPkinase_bac"/>
</dbReference>
<dbReference type="NCBIfam" id="NF001815">
    <property type="entry name" value="PRK00553.1"/>
    <property type="match status" value="1"/>
</dbReference>
<dbReference type="NCBIfam" id="NF002320">
    <property type="entry name" value="PRK01259.1"/>
    <property type="match status" value="1"/>
</dbReference>
<dbReference type="NCBIfam" id="TIGR01251">
    <property type="entry name" value="ribP_PPkin"/>
    <property type="match status" value="1"/>
</dbReference>
<dbReference type="PANTHER" id="PTHR10210">
    <property type="entry name" value="RIBOSE-PHOSPHATE DIPHOSPHOKINASE FAMILY MEMBER"/>
    <property type="match status" value="1"/>
</dbReference>
<dbReference type="PANTHER" id="PTHR10210:SF41">
    <property type="entry name" value="RIBOSE-PHOSPHATE PYROPHOSPHOKINASE 1, CHLOROPLASTIC"/>
    <property type="match status" value="1"/>
</dbReference>
<dbReference type="Pfam" id="PF00156">
    <property type="entry name" value="Pribosyltran"/>
    <property type="match status" value="1"/>
</dbReference>
<dbReference type="Pfam" id="PF13793">
    <property type="entry name" value="Pribosyltran_N"/>
    <property type="match status" value="1"/>
</dbReference>
<dbReference type="SMART" id="SM01400">
    <property type="entry name" value="Pribosyltran_N"/>
    <property type="match status" value="1"/>
</dbReference>
<dbReference type="SUPFAM" id="SSF53271">
    <property type="entry name" value="PRTase-like"/>
    <property type="match status" value="1"/>
</dbReference>
<dbReference type="PROSITE" id="PS00114">
    <property type="entry name" value="PRPP_SYNTHASE"/>
    <property type="match status" value="1"/>
</dbReference>
<feature type="chain" id="PRO_0000141160" description="Ribose-phosphate pyrophosphokinase">
    <location>
        <begin position="1"/>
        <end position="332"/>
    </location>
</feature>
<feature type="active site" evidence="1">
    <location>
        <position position="199"/>
    </location>
</feature>
<feature type="binding site" evidence="1">
    <location>
        <begin position="43"/>
        <end position="45"/>
    </location>
    <ligand>
        <name>ATP</name>
        <dbReference type="ChEBI" id="CHEBI:30616"/>
    </ligand>
</feature>
<feature type="binding site" evidence="1">
    <location>
        <begin position="102"/>
        <end position="103"/>
    </location>
    <ligand>
        <name>ATP</name>
        <dbReference type="ChEBI" id="CHEBI:30616"/>
    </ligand>
</feature>
<feature type="binding site" evidence="1">
    <location>
        <position position="136"/>
    </location>
    <ligand>
        <name>Mg(2+)</name>
        <dbReference type="ChEBI" id="CHEBI:18420"/>
        <label>1</label>
    </ligand>
</feature>
<feature type="binding site" evidence="1">
    <location>
        <position position="176"/>
    </location>
    <ligand>
        <name>Mg(2+)</name>
        <dbReference type="ChEBI" id="CHEBI:18420"/>
        <label>2</label>
    </ligand>
</feature>
<feature type="binding site" evidence="1">
    <location>
        <position position="201"/>
    </location>
    <ligand>
        <name>D-ribose 5-phosphate</name>
        <dbReference type="ChEBI" id="CHEBI:78346"/>
    </ligand>
</feature>
<feature type="binding site" evidence="1">
    <location>
        <position position="225"/>
    </location>
    <ligand>
        <name>D-ribose 5-phosphate</name>
        <dbReference type="ChEBI" id="CHEBI:78346"/>
    </ligand>
</feature>
<feature type="binding site" evidence="1">
    <location>
        <begin position="229"/>
        <end position="233"/>
    </location>
    <ligand>
        <name>D-ribose 5-phosphate</name>
        <dbReference type="ChEBI" id="CHEBI:78346"/>
    </ligand>
</feature>
<keyword id="KW-0067">ATP-binding</keyword>
<keyword id="KW-0963">Cytoplasm</keyword>
<keyword id="KW-0418">Kinase</keyword>
<keyword id="KW-0460">Magnesium</keyword>
<keyword id="KW-0479">Metal-binding</keyword>
<keyword id="KW-0545">Nucleotide biosynthesis</keyword>
<keyword id="KW-0547">Nucleotide-binding</keyword>
<keyword id="KW-1185">Reference proteome</keyword>
<keyword id="KW-0808">Transferase</keyword>
<accession>P47304</accession>
<gene>
    <name evidence="1" type="primary">prs</name>
    <name type="synonym">prsA</name>
    <name type="ordered locus">MG058</name>
</gene>
<protein>
    <recommendedName>
        <fullName evidence="1">Ribose-phosphate pyrophosphokinase</fullName>
        <shortName evidence="1">RPPK</shortName>
        <ecNumber evidence="1">2.7.6.1</ecNumber>
    </recommendedName>
    <alternativeName>
        <fullName evidence="1">5-phospho-D-ribosyl alpha-1-diphosphate synthase</fullName>
    </alternativeName>
    <alternativeName>
        <fullName evidence="1">Phosphoribosyl diphosphate synthase</fullName>
    </alternativeName>
    <alternativeName>
        <fullName evidence="1">Phosphoribosyl pyrophosphate synthase</fullName>
        <shortName evidence="1">P-Rib-PP synthase</shortName>
        <shortName evidence="1">PRPP synthase</shortName>
        <shortName evidence="1">PRPPase</shortName>
    </alternativeName>
</protein>
<evidence type="ECO:0000255" key="1">
    <source>
        <dbReference type="HAMAP-Rule" id="MF_00583"/>
    </source>
</evidence>
<evidence type="ECO:0000269" key="2">
    <source>
    </source>
</evidence>
<name>KPRS_MYCGE</name>
<organism>
    <name type="scientific">Mycoplasma genitalium (strain ATCC 33530 / DSM 19775 / NCTC 10195 / G37)</name>
    <name type="common">Mycoplasmoides genitalium</name>
    <dbReference type="NCBI Taxonomy" id="243273"/>
    <lineage>
        <taxon>Bacteria</taxon>
        <taxon>Bacillati</taxon>
        <taxon>Mycoplasmatota</taxon>
        <taxon>Mycoplasmoidales</taxon>
        <taxon>Mycoplasmoidaceae</taxon>
        <taxon>Mycoplasmoides</taxon>
    </lineage>
</organism>
<sequence length="332" mass="37513">MKLSIDNKKHVIFSLSKSKTLVENICKKLNISEGKMVCEHFADGETYIRFDESVRNKDIYIFQSTCPNVNDSLMELLIAIDALKRGSAKSITAILPYYGYARQDRKTKGREPITSKLIADMLTKAGANRVVLTDIHSDQTQGFFDIPVDSLRTYHIFLFRVIELLGKKDLVVVSPDYGGVKRARLIANTLELPLAIIDKRRPSHNVAESINVLGEVKNKNCLIVDDMIDTGGTVIAAAKLLQKEQAKKVCVMATHGLFNNDAEQKFMEAFDQKLIDFLFVSNSIPQYKFKAVKQFEVVDLASLYEEVVLCYANSLSVSAIYERHIEWIKKHV</sequence>
<proteinExistence type="inferred from homology"/>
<reference key="1">
    <citation type="journal article" date="1995" name="Science">
        <title>The minimal gene complement of Mycoplasma genitalium.</title>
        <authorList>
            <person name="Fraser C.M."/>
            <person name="Gocayne J.D."/>
            <person name="White O."/>
            <person name="Adams M.D."/>
            <person name="Clayton R.A."/>
            <person name="Fleischmann R.D."/>
            <person name="Bult C.J."/>
            <person name="Kerlavage A.R."/>
            <person name="Sutton G.G."/>
            <person name="Kelley J.M."/>
            <person name="Fritchman J.L."/>
            <person name="Weidman J.F."/>
            <person name="Small K.V."/>
            <person name="Sandusky M."/>
            <person name="Fuhrmann J.L."/>
            <person name="Nguyen D.T."/>
            <person name="Utterback T.R."/>
            <person name="Saudek D.M."/>
            <person name="Phillips C.A."/>
            <person name="Merrick J.M."/>
            <person name="Tomb J.-F."/>
            <person name="Dougherty B.A."/>
            <person name="Bott K.F."/>
            <person name="Hu P.-C."/>
            <person name="Lucier T.S."/>
            <person name="Peterson S.N."/>
            <person name="Smith H.O."/>
            <person name="Hutchison C.A. III"/>
            <person name="Venter J.C."/>
        </authorList>
    </citation>
    <scope>NUCLEOTIDE SEQUENCE [LARGE SCALE GENOMIC DNA]</scope>
    <source>
        <strain>ATCC 33530 / DSM 19775 / NCTC 10195 / G37</strain>
    </source>
</reference>
<reference key="2">
    <citation type="journal article" date="2006" name="Proc. Natl. Acad. Sci. U.S.A.">
        <title>Essential genes of a minimal bacterium.</title>
        <authorList>
            <person name="Glass J.I."/>
            <person name="Assad-Garcia N."/>
            <person name="Alperovich N."/>
            <person name="Yooseph S."/>
            <person name="Lewis M.R."/>
            <person name="Maruf M."/>
            <person name="Hutchison C.A. III"/>
            <person name="Smith H.O."/>
            <person name="Venter J.C."/>
        </authorList>
    </citation>
    <scope>SEQUENCE REVISION</scope>
    <scope>DISRUPTION PHENOTYPE</scope>
    <source>
        <strain>ATCC 33530 / DSM 19775 / NCTC 10195 / G37</strain>
    </source>
</reference>